<feature type="chain" id="PRO_1000149571" description="Glycerol-3-phosphate acyltransferase">
    <location>
        <begin position="1"/>
        <end position="205"/>
    </location>
</feature>
<feature type="topological domain" description="Periplasmic" evidence="1">
    <location>
        <begin position="1"/>
        <end position="3"/>
    </location>
</feature>
<feature type="transmembrane region" description="Helical" evidence="1">
    <location>
        <begin position="4"/>
        <end position="24"/>
    </location>
</feature>
<feature type="topological domain" description="Cytoplasmic" evidence="1">
    <location>
        <begin position="25"/>
        <end position="52"/>
    </location>
</feature>
<feature type="transmembrane region" description="Helical" evidence="1">
    <location>
        <begin position="53"/>
        <end position="73"/>
    </location>
</feature>
<feature type="topological domain" description="Periplasmic" evidence="1">
    <location>
        <begin position="74"/>
        <end position="80"/>
    </location>
</feature>
<feature type="transmembrane region" description="Helical" evidence="1">
    <location>
        <begin position="81"/>
        <end position="101"/>
    </location>
</feature>
<feature type="topological domain" description="Cytoplasmic" evidence="1">
    <location>
        <begin position="102"/>
        <end position="111"/>
    </location>
</feature>
<feature type="transmembrane region" description="Helical" evidence="1">
    <location>
        <begin position="112"/>
        <end position="132"/>
    </location>
</feature>
<feature type="topological domain" description="Periplasmic" evidence="1">
    <location>
        <begin position="133"/>
        <end position="137"/>
    </location>
</feature>
<feature type="transmembrane region" description="Helical" evidence="1">
    <location>
        <begin position="138"/>
        <end position="158"/>
    </location>
</feature>
<feature type="topological domain" description="Cytoplasmic" evidence="1">
    <location>
        <begin position="159"/>
        <end position="205"/>
    </location>
</feature>
<sequence>MSAIAPGMILIAYLCGSISSAILVCRLCGLPDPRTSGSGNPGATNVLRIGGKGAAVAVLIFDVLKGMLPVWGAYELGVSPFWLGLIAIAACLGHIWPVFFGFKGGKGVATAFGAIAPIGWDLTGVMAGTWLLTVLLSGYSSLGAIVSALIAPFYVWWFKPQFTFPVSMLSCLILLRHHDNIQRLWRRQETKIWTKFKRKREKDPE</sequence>
<dbReference type="EC" id="2.3.1.15" evidence="1"/>
<dbReference type="EC" id="2.3.1.n5" evidence="1"/>
<dbReference type="EMBL" id="CU928162">
    <property type="protein sequence ID" value="CAR09877.2"/>
    <property type="molecule type" value="Genomic_DNA"/>
</dbReference>
<dbReference type="RefSeq" id="WP_001272796.1">
    <property type="nucleotide sequence ID" value="NC_011745.1"/>
</dbReference>
<dbReference type="SMR" id="B7N0K9"/>
<dbReference type="GeneID" id="93778934"/>
<dbReference type="KEGG" id="ecq:ECED1_3728"/>
<dbReference type="HOGENOM" id="CLU_081254_0_2_6"/>
<dbReference type="UniPathway" id="UPA00085"/>
<dbReference type="Proteomes" id="UP000000748">
    <property type="component" value="Chromosome"/>
</dbReference>
<dbReference type="GO" id="GO:0005886">
    <property type="term" value="C:plasma membrane"/>
    <property type="evidence" value="ECO:0007669"/>
    <property type="project" value="UniProtKB-SubCell"/>
</dbReference>
<dbReference type="GO" id="GO:0043772">
    <property type="term" value="F:acyl-phosphate glycerol-3-phosphate acyltransferase activity"/>
    <property type="evidence" value="ECO:0007669"/>
    <property type="project" value="InterPro"/>
</dbReference>
<dbReference type="GO" id="GO:0004366">
    <property type="term" value="F:glycerol-3-phosphate O-acyltransferase activity"/>
    <property type="evidence" value="ECO:0007669"/>
    <property type="project" value="UniProtKB-UniRule"/>
</dbReference>
<dbReference type="GO" id="GO:0008654">
    <property type="term" value="P:phospholipid biosynthetic process"/>
    <property type="evidence" value="ECO:0007669"/>
    <property type="project" value="UniProtKB-UniRule"/>
</dbReference>
<dbReference type="HAMAP" id="MF_01043">
    <property type="entry name" value="PlsY"/>
    <property type="match status" value="1"/>
</dbReference>
<dbReference type="InterPro" id="IPR003811">
    <property type="entry name" value="G3P_acylTferase_PlsY"/>
</dbReference>
<dbReference type="NCBIfam" id="TIGR00023">
    <property type="entry name" value="glycerol-3-phosphate 1-O-acyltransferase PlsY"/>
    <property type="match status" value="1"/>
</dbReference>
<dbReference type="PANTHER" id="PTHR30309:SF0">
    <property type="entry name" value="GLYCEROL-3-PHOSPHATE ACYLTRANSFERASE-RELATED"/>
    <property type="match status" value="1"/>
</dbReference>
<dbReference type="PANTHER" id="PTHR30309">
    <property type="entry name" value="INNER MEMBRANE PROTEIN YGIH"/>
    <property type="match status" value="1"/>
</dbReference>
<dbReference type="Pfam" id="PF02660">
    <property type="entry name" value="G3P_acyltransf"/>
    <property type="match status" value="1"/>
</dbReference>
<dbReference type="SMART" id="SM01207">
    <property type="entry name" value="G3P_acyltransf"/>
    <property type="match status" value="1"/>
</dbReference>
<accession>B7N0K9</accession>
<proteinExistence type="inferred from homology"/>
<evidence type="ECO:0000255" key="1">
    <source>
        <dbReference type="HAMAP-Rule" id="MF_01043"/>
    </source>
</evidence>
<comment type="function">
    <text evidence="1">Catalyzes the transfer of an acyl group from acyl-ACP to glycerol-3-phosphate (G3P) to form lysophosphatidic acid (LPA). This enzyme can also utilize acyl-CoA as fatty acyl donor, but not acyl-PO(4).</text>
</comment>
<comment type="catalytic activity">
    <reaction evidence="1">
        <text>sn-glycerol 3-phosphate + an acyl-CoA = a 1-acyl-sn-glycero-3-phosphate + CoA</text>
        <dbReference type="Rhea" id="RHEA:15325"/>
        <dbReference type="ChEBI" id="CHEBI:57287"/>
        <dbReference type="ChEBI" id="CHEBI:57597"/>
        <dbReference type="ChEBI" id="CHEBI:57970"/>
        <dbReference type="ChEBI" id="CHEBI:58342"/>
        <dbReference type="EC" id="2.3.1.15"/>
    </reaction>
</comment>
<comment type="catalytic activity">
    <reaction evidence="1">
        <text>a fatty acyl-[ACP] + sn-glycerol 3-phosphate = a 1-acyl-sn-glycero-3-phosphate + holo-[ACP]</text>
        <dbReference type="Rhea" id="RHEA:42300"/>
        <dbReference type="Rhea" id="RHEA-COMP:9685"/>
        <dbReference type="Rhea" id="RHEA-COMP:14125"/>
        <dbReference type="ChEBI" id="CHEBI:57597"/>
        <dbReference type="ChEBI" id="CHEBI:57970"/>
        <dbReference type="ChEBI" id="CHEBI:64479"/>
        <dbReference type="ChEBI" id="CHEBI:138651"/>
        <dbReference type="EC" id="2.3.1.n5"/>
    </reaction>
</comment>
<comment type="pathway">
    <text evidence="1">Lipid metabolism; phospholipid metabolism.</text>
</comment>
<comment type="subunit">
    <text evidence="1">Probably interacts with PlsX.</text>
</comment>
<comment type="subcellular location">
    <subcellularLocation>
        <location evidence="1">Cell inner membrane</location>
        <topology evidence="1">Multi-pass membrane protein</topology>
    </subcellularLocation>
</comment>
<comment type="similarity">
    <text evidence="1">Belongs to the PlsY family.</text>
</comment>
<name>PLSY_ECO81</name>
<protein>
    <recommendedName>
        <fullName evidence="1">Glycerol-3-phosphate acyltransferase</fullName>
    </recommendedName>
    <alternativeName>
        <fullName evidence="1">G3P acyltransferase</fullName>
        <shortName evidence="1">GPAT</shortName>
        <ecNumber evidence="1">2.3.1.15</ecNumber>
        <ecNumber evidence="1">2.3.1.n5</ecNumber>
    </alternativeName>
    <alternativeName>
        <fullName evidence="1">Lysophosphatidic acid synthase</fullName>
        <shortName evidence="1">LPA synthase</shortName>
    </alternativeName>
</protein>
<organism>
    <name type="scientific">Escherichia coli O81 (strain ED1a)</name>
    <dbReference type="NCBI Taxonomy" id="585397"/>
    <lineage>
        <taxon>Bacteria</taxon>
        <taxon>Pseudomonadati</taxon>
        <taxon>Pseudomonadota</taxon>
        <taxon>Gammaproteobacteria</taxon>
        <taxon>Enterobacterales</taxon>
        <taxon>Enterobacteriaceae</taxon>
        <taxon>Escherichia</taxon>
    </lineage>
</organism>
<keyword id="KW-0997">Cell inner membrane</keyword>
<keyword id="KW-1003">Cell membrane</keyword>
<keyword id="KW-0444">Lipid biosynthesis</keyword>
<keyword id="KW-0443">Lipid metabolism</keyword>
<keyword id="KW-0472">Membrane</keyword>
<keyword id="KW-0594">Phospholipid biosynthesis</keyword>
<keyword id="KW-1208">Phospholipid metabolism</keyword>
<keyword id="KW-0808">Transferase</keyword>
<keyword id="KW-0812">Transmembrane</keyword>
<keyword id="KW-1133">Transmembrane helix</keyword>
<gene>
    <name evidence="1" type="primary">plsY</name>
    <name type="synonym">ygiH</name>
    <name type="ordered locus">ECED1_3728</name>
</gene>
<reference key="1">
    <citation type="journal article" date="2009" name="PLoS Genet.">
        <title>Organised genome dynamics in the Escherichia coli species results in highly diverse adaptive paths.</title>
        <authorList>
            <person name="Touchon M."/>
            <person name="Hoede C."/>
            <person name="Tenaillon O."/>
            <person name="Barbe V."/>
            <person name="Baeriswyl S."/>
            <person name="Bidet P."/>
            <person name="Bingen E."/>
            <person name="Bonacorsi S."/>
            <person name="Bouchier C."/>
            <person name="Bouvet O."/>
            <person name="Calteau A."/>
            <person name="Chiapello H."/>
            <person name="Clermont O."/>
            <person name="Cruveiller S."/>
            <person name="Danchin A."/>
            <person name="Diard M."/>
            <person name="Dossat C."/>
            <person name="Karoui M.E."/>
            <person name="Frapy E."/>
            <person name="Garry L."/>
            <person name="Ghigo J.M."/>
            <person name="Gilles A.M."/>
            <person name="Johnson J."/>
            <person name="Le Bouguenec C."/>
            <person name="Lescat M."/>
            <person name="Mangenot S."/>
            <person name="Martinez-Jehanne V."/>
            <person name="Matic I."/>
            <person name="Nassif X."/>
            <person name="Oztas S."/>
            <person name="Petit M.A."/>
            <person name="Pichon C."/>
            <person name="Rouy Z."/>
            <person name="Ruf C.S."/>
            <person name="Schneider D."/>
            <person name="Tourret J."/>
            <person name="Vacherie B."/>
            <person name="Vallenet D."/>
            <person name="Medigue C."/>
            <person name="Rocha E.P.C."/>
            <person name="Denamur E."/>
        </authorList>
    </citation>
    <scope>NUCLEOTIDE SEQUENCE [LARGE SCALE GENOMIC DNA]</scope>
    <source>
        <strain>ED1a</strain>
    </source>
</reference>